<keyword id="KW-0143">Chaperone</keyword>
<keyword id="KW-0963">Cytoplasm</keyword>
<keyword id="KW-0690">Ribosome biogenesis</keyword>
<keyword id="KW-0698">rRNA processing</keyword>
<reference key="1">
    <citation type="submission" date="2008-02" db="EMBL/GenBank/DDBJ databases">
        <title>Complete sequence of chromosome 1 of Burkholderia cenocepacia MC0-3.</title>
        <authorList>
            <person name="Copeland A."/>
            <person name="Lucas S."/>
            <person name="Lapidus A."/>
            <person name="Barry K."/>
            <person name="Bruce D."/>
            <person name="Goodwin L."/>
            <person name="Glavina del Rio T."/>
            <person name="Dalin E."/>
            <person name="Tice H."/>
            <person name="Pitluck S."/>
            <person name="Chain P."/>
            <person name="Malfatti S."/>
            <person name="Shin M."/>
            <person name="Vergez L."/>
            <person name="Schmutz J."/>
            <person name="Larimer F."/>
            <person name="Land M."/>
            <person name="Hauser L."/>
            <person name="Kyrpides N."/>
            <person name="Mikhailova N."/>
            <person name="Tiedje J."/>
            <person name="Richardson P."/>
        </authorList>
    </citation>
    <scope>NUCLEOTIDE SEQUENCE [LARGE SCALE GENOMIC DNA]</scope>
    <source>
        <strain>MC0-3</strain>
    </source>
</reference>
<organism>
    <name type="scientific">Burkholderia orbicola (strain MC0-3)</name>
    <dbReference type="NCBI Taxonomy" id="406425"/>
    <lineage>
        <taxon>Bacteria</taxon>
        <taxon>Pseudomonadati</taxon>
        <taxon>Pseudomonadota</taxon>
        <taxon>Betaproteobacteria</taxon>
        <taxon>Burkholderiales</taxon>
        <taxon>Burkholderiaceae</taxon>
        <taxon>Burkholderia</taxon>
        <taxon>Burkholderia cepacia complex</taxon>
        <taxon>Burkholderia orbicola</taxon>
    </lineage>
</organism>
<sequence length="225" mass="24425">MAGHDSGNARRGRASFGAFVRKPVERDSVANAGQAAEPGSPEATQAWPDDAVEVGAVVDAYGLKGWVKVATHADAGRGGDALLNARRWWLERGAERLSVRIMQSKTHSDTVVAQPAGVSDRDAALSMRGFRVFVRREDFPALAADEFYWVDLIGLEVVNEQSVALGKVSGMIDNGVHSIMRVEYPATGKDGQPTTDERLIPFVGVYVKTVDQAARRIVVDWEADY</sequence>
<feature type="chain" id="PRO_0000351731" description="Ribosome maturation factor RimM">
    <location>
        <begin position="1"/>
        <end position="225"/>
    </location>
</feature>
<feature type="domain" description="PRC barrel" evidence="1">
    <location>
        <begin position="144"/>
        <end position="225"/>
    </location>
</feature>
<accession>B1JXU4</accession>
<protein>
    <recommendedName>
        <fullName evidence="1">Ribosome maturation factor RimM</fullName>
    </recommendedName>
</protein>
<gene>
    <name evidence="1" type="primary">rimM</name>
    <name type="ordered locus">Bcenmc03_1029</name>
</gene>
<proteinExistence type="inferred from homology"/>
<name>RIMM_BURO0</name>
<evidence type="ECO:0000255" key="1">
    <source>
        <dbReference type="HAMAP-Rule" id="MF_00014"/>
    </source>
</evidence>
<dbReference type="EMBL" id="CP000958">
    <property type="protein sequence ID" value="ACA90206.1"/>
    <property type="molecule type" value="Genomic_DNA"/>
</dbReference>
<dbReference type="RefSeq" id="WP_012328129.1">
    <property type="nucleotide sequence ID" value="NC_010508.1"/>
</dbReference>
<dbReference type="SMR" id="B1JXU4"/>
<dbReference type="GeneID" id="83047822"/>
<dbReference type="KEGG" id="bcm:Bcenmc03_1029"/>
<dbReference type="HOGENOM" id="CLU_077636_1_0_4"/>
<dbReference type="Proteomes" id="UP000002169">
    <property type="component" value="Chromosome 1"/>
</dbReference>
<dbReference type="GO" id="GO:0005737">
    <property type="term" value="C:cytoplasm"/>
    <property type="evidence" value="ECO:0007669"/>
    <property type="project" value="UniProtKB-SubCell"/>
</dbReference>
<dbReference type="GO" id="GO:0005840">
    <property type="term" value="C:ribosome"/>
    <property type="evidence" value="ECO:0007669"/>
    <property type="project" value="InterPro"/>
</dbReference>
<dbReference type="GO" id="GO:0043022">
    <property type="term" value="F:ribosome binding"/>
    <property type="evidence" value="ECO:0007669"/>
    <property type="project" value="InterPro"/>
</dbReference>
<dbReference type="GO" id="GO:0042274">
    <property type="term" value="P:ribosomal small subunit biogenesis"/>
    <property type="evidence" value="ECO:0007669"/>
    <property type="project" value="UniProtKB-UniRule"/>
</dbReference>
<dbReference type="GO" id="GO:0006364">
    <property type="term" value="P:rRNA processing"/>
    <property type="evidence" value="ECO:0007669"/>
    <property type="project" value="UniProtKB-UniRule"/>
</dbReference>
<dbReference type="Gene3D" id="2.30.30.240">
    <property type="entry name" value="PRC-barrel domain"/>
    <property type="match status" value="1"/>
</dbReference>
<dbReference type="Gene3D" id="2.40.30.60">
    <property type="entry name" value="RimM"/>
    <property type="match status" value="1"/>
</dbReference>
<dbReference type="HAMAP" id="MF_00014">
    <property type="entry name" value="Ribosome_mat_RimM"/>
    <property type="match status" value="1"/>
</dbReference>
<dbReference type="InterPro" id="IPR011033">
    <property type="entry name" value="PRC_barrel-like_sf"/>
</dbReference>
<dbReference type="InterPro" id="IPR056792">
    <property type="entry name" value="PRC_RimM"/>
</dbReference>
<dbReference type="InterPro" id="IPR011961">
    <property type="entry name" value="RimM"/>
</dbReference>
<dbReference type="InterPro" id="IPR002676">
    <property type="entry name" value="RimM_N"/>
</dbReference>
<dbReference type="InterPro" id="IPR036976">
    <property type="entry name" value="RimM_N_sf"/>
</dbReference>
<dbReference type="InterPro" id="IPR009000">
    <property type="entry name" value="Transl_B-barrel_sf"/>
</dbReference>
<dbReference type="NCBIfam" id="TIGR02273">
    <property type="entry name" value="16S_RimM"/>
    <property type="match status" value="1"/>
</dbReference>
<dbReference type="PANTHER" id="PTHR33692">
    <property type="entry name" value="RIBOSOME MATURATION FACTOR RIMM"/>
    <property type="match status" value="1"/>
</dbReference>
<dbReference type="PANTHER" id="PTHR33692:SF1">
    <property type="entry name" value="RIBOSOME MATURATION FACTOR RIMM"/>
    <property type="match status" value="1"/>
</dbReference>
<dbReference type="Pfam" id="PF24986">
    <property type="entry name" value="PRC_RimM"/>
    <property type="match status" value="1"/>
</dbReference>
<dbReference type="Pfam" id="PF01782">
    <property type="entry name" value="RimM"/>
    <property type="match status" value="1"/>
</dbReference>
<dbReference type="SUPFAM" id="SSF50346">
    <property type="entry name" value="PRC-barrel domain"/>
    <property type="match status" value="1"/>
</dbReference>
<dbReference type="SUPFAM" id="SSF50447">
    <property type="entry name" value="Translation proteins"/>
    <property type="match status" value="1"/>
</dbReference>
<comment type="function">
    <text evidence="1">An accessory protein needed during the final step in the assembly of 30S ribosomal subunit, possibly for assembly of the head region. Essential for efficient processing of 16S rRNA. May be needed both before and after RbfA during the maturation of 16S rRNA. It has affinity for free ribosomal 30S subunits but not for 70S ribosomes.</text>
</comment>
<comment type="subunit">
    <text evidence="1">Binds ribosomal protein uS19.</text>
</comment>
<comment type="subcellular location">
    <subcellularLocation>
        <location evidence="1">Cytoplasm</location>
    </subcellularLocation>
</comment>
<comment type="domain">
    <text evidence="1">The PRC barrel domain binds ribosomal protein uS19.</text>
</comment>
<comment type="similarity">
    <text evidence="1">Belongs to the RimM family.</text>
</comment>